<name>PIMT_CELJU</name>
<evidence type="ECO:0000255" key="1">
    <source>
        <dbReference type="HAMAP-Rule" id="MF_00090"/>
    </source>
</evidence>
<keyword id="KW-0963">Cytoplasm</keyword>
<keyword id="KW-0489">Methyltransferase</keyword>
<keyword id="KW-1185">Reference proteome</keyword>
<keyword id="KW-0949">S-adenosyl-L-methionine</keyword>
<keyword id="KW-0808">Transferase</keyword>
<reference key="1">
    <citation type="journal article" date="2008" name="J. Bacteriol.">
        <title>Insights into plant cell wall degradation from the genome sequence of the soil bacterium Cellvibrio japonicus.</title>
        <authorList>
            <person name="DeBoy R.T."/>
            <person name="Mongodin E.F."/>
            <person name="Fouts D.E."/>
            <person name="Tailford L.E."/>
            <person name="Khouri H."/>
            <person name="Emerson J.B."/>
            <person name="Mohamoud Y."/>
            <person name="Watkins K."/>
            <person name="Henrissat B."/>
            <person name="Gilbert H.J."/>
            <person name="Nelson K.E."/>
        </authorList>
    </citation>
    <scope>NUCLEOTIDE SEQUENCE [LARGE SCALE GENOMIC DNA]</scope>
    <source>
        <strain>Ueda107</strain>
    </source>
</reference>
<gene>
    <name evidence="1" type="primary">pcm</name>
    <name type="ordered locus">CJA_2220</name>
</gene>
<sequence length="224" mass="24876">MTNLLLQGVGMTSLRTRERLIQRLRDQGVTNLRVLDIMLNTPRHLFLDEALAHRAYEDTALPIGHGQTLSQPYIVARMTELLLGAAGKLNKVLEVGTGSGYQTSLLAQLVPEVYTVERIKPLQDKARERLHQLGLRNIRYRHADGGFGWPDMGAYDGILSTAAPQVVPDELLKQLAPGGVLVIPVGGREQQLHLIIRDTEDTEKFVTQILEPVKFVPFLSGTAR</sequence>
<proteinExistence type="inferred from homology"/>
<protein>
    <recommendedName>
        <fullName evidence="1">Protein-L-isoaspartate O-methyltransferase</fullName>
        <ecNumber evidence="1">2.1.1.77</ecNumber>
    </recommendedName>
    <alternativeName>
        <fullName evidence="1">L-isoaspartyl protein carboxyl methyltransferase</fullName>
    </alternativeName>
    <alternativeName>
        <fullName evidence="1">Protein L-isoaspartyl methyltransferase</fullName>
    </alternativeName>
    <alternativeName>
        <fullName evidence="1">Protein-beta-aspartate methyltransferase</fullName>
        <shortName evidence="1">PIMT</shortName>
    </alternativeName>
</protein>
<accession>B3PJA8</accession>
<dbReference type="EC" id="2.1.1.77" evidence="1"/>
<dbReference type="EMBL" id="CP000934">
    <property type="protein sequence ID" value="ACE84066.1"/>
    <property type="molecule type" value="Genomic_DNA"/>
</dbReference>
<dbReference type="RefSeq" id="WP_012487820.1">
    <property type="nucleotide sequence ID" value="NC_010995.1"/>
</dbReference>
<dbReference type="SMR" id="B3PJA8"/>
<dbReference type="STRING" id="498211.CJA_2220"/>
<dbReference type="KEGG" id="cja:CJA_2220"/>
<dbReference type="eggNOG" id="COG2518">
    <property type="taxonomic scope" value="Bacteria"/>
</dbReference>
<dbReference type="HOGENOM" id="CLU_055432_2_0_6"/>
<dbReference type="Proteomes" id="UP000001036">
    <property type="component" value="Chromosome"/>
</dbReference>
<dbReference type="GO" id="GO:0005737">
    <property type="term" value="C:cytoplasm"/>
    <property type="evidence" value="ECO:0007669"/>
    <property type="project" value="UniProtKB-SubCell"/>
</dbReference>
<dbReference type="GO" id="GO:0004719">
    <property type="term" value="F:protein-L-isoaspartate (D-aspartate) O-methyltransferase activity"/>
    <property type="evidence" value="ECO:0007669"/>
    <property type="project" value="UniProtKB-UniRule"/>
</dbReference>
<dbReference type="GO" id="GO:0032259">
    <property type="term" value="P:methylation"/>
    <property type="evidence" value="ECO:0007669"/>
    <property type="project" value="UniProtKB-KW"/>
</dbReference>
<dbReference type="GO" id="GO:0036211">
    <property type="term" value="P:protein modification process"/>
    <property type="evidence" value="ECO:0007669"/>
    <property type="project" value="UniProtKB-UniRule"/>
</dbReference>
<dbReference type="GO" id="GO:0030091">
    <property type="term" value="P:protein repair"/>
    <property type="evidence" value="ECO:0007669"/>
    <property type="project" value="UniProtKB-UniRule"/>
</dbReference>
<dbReference type="CDD" id="cd02440">
    <property type="entry name" value="AdoMet_MTases"/>
    <property type="match status" value="1"/>
</dbReference>
<dbReference type="FunFam" id="3.40.50.150:FF:000010">
    <property type="entry name" value="Protein-L-isoaspartate O-methyltransferase"/>
    <property type="match status" value="1"/>
</dbReference>
<dbReference type="Gene3D" id="3.40.50.150">
    <property type="entry name" value="Vaccinia Virus protein VP39"/>
    <property type="match status" value="1"/>
</dbReference>
<dbReference type="HAMAP" id="MF_00090">
    <property type="entry name" value="PIMT"/>
    <property type="match status" value="1"/>
</dbReference>
<dbReference type="InterPro" id="IPR000682">
    <property type="entry name" value="PCMT"/>
</dbReference>
<dbReference type="InterPro" id="IPR029063">
    <property type="entry name" value="SAM-dependent_MTases_sf"/>
</dbReference>
<dbReference type="NCBIfam" id="TIGR00080">
    <property type="entry name" value="pimt"/>
    <property type="match status" value="1"/>
</dbReference>
<dbReference type="NCBIfam" id="NF001453">
    <property type="entry name" value="PRK00312.1"/>
    <property type="match status" value="1"/>
</dbReference>
<dbReference type="PANTHER" id="PTHR11579">
    <property type="entry name" value="PROTEIN-L-ISOASPARTATE O-METHYLTRANSFERASE"/>
    <property type="match status" value="1"/>
</dbReference>
<dbReference type="PANTHER" id="PTHR11579:SF0">
    <property type="entry name" value="PROTEIN-L-ISOASPARTATE(D-ASPARTATE) O-METHYLTRANSFERASE"/>
    <property type="match status" value="1"/>
</dbReference>
<dbReference type="Pfam" id="PF01135">
    <property type="entry name" value="PCMT"/>
    <property type="match status" value="1"/>
</dbReference>
<dbReference type="SUPFAM" id="SSF53335">
    <property type="entry name" value="S-adenosyl-L-methionine-dependent methyltransferases"/>
    <property type="match status" value="1"/>
</dbReference>
<comment type="function">
    <text evidence="1">Catalyzes the methyl esterification of L-isoaspartyl residues in peptides and proteins that result from spontaneous decomposition of normal L-aspartyl and L-asparaginyl residues. It plays a role in the repair and/or degradation of damaged proteins.</text>
</comment>
<comment type="catalytic activity">
    <reaction evidence="1">
        <text>[protein]-L-isoaspartate + S-adenosyl-L-methionine = [protein]-L-isoaspartate alpha-methyl ester + S-adenosyl-L-homocysteine</text>
        <dbReference type="Rhea" id="RHEA:12705"/>
        <dbReference type="Rhea" id="RHEA-COMP:12143"/>
        <dbReference type="Rhea" id="RHEA-COMP:12144"/>
        <dbReference type="ChEBI" id="CHEBI:57856"/>
        <dbReference type="ChEBI" id="CHEBI:59789"/>
        <dbReference type="ChEBI" id="CHEBI:90596"/>
        <dbReference type="ChEBI" id="CHEBI:90598"/>
        <dbReference type="EC" id="2.1.1.77"/>
    </reaction>
</comment>
<comment type="subcellular location">
    <subcellularLocation>
        <location evidence="1">Cytoplasm</location>
    </subcellularLocation>
</comment>
<comment type="similarity">
    <text evidence="1">Belongs to the methyltransferase superfamily. L-isoaspartyl/D-aspartyl protein methyltransferase family.</text>
</comment>
<organism>
    <name type="scientific">Cellvibrio japonicus (strain Ueda107)</name>
    <name type="common">Pseudomonas fluorescens subsp. cellulosa</name>
    <dbReference type="NCBI Taxonomy" id="498211"/>
    <lineage>
        <taxon>Bacteria</taxon>
        <taxon>Pseudomonadati</taxon>
        <taxon>Pseudomonadota</taxon>
        <taxon>Gammaproteobacteria</taxon>
        <taxon>Cellvibrionales</taxon>
        <taxon>Cellvibrionaceae</taxon>
        <taxon>Cellvibrio</taxon>
    </lineage>
</organism>
<feature type="chain" id="PRO_1000093250" description="Protein-L-isoaspartate O-methyltransferase">
    <location>
        <begin position="1"/>
        <end position="224"/>
    </location>
</feature>
<feature type="active site" evidence="1">
    <location>
        <position position="70"/>
    </location>
</feature>